<sequence length="284" mass="32459">MNKQQLKAYFMLMRLHRPIPILLILWPTLTALVLASHGLPDISYLVIFTIGVVVMRTVGCIINDIADVDFDKHVARTNTRPLTSGQLSIKNAIWLCISLTLVAFICVLFLNLYTILLSFVALFLAILYPFCKRFFAIPQLILGLAFNFGIFMAFSAIQNQIPVEAWIFYIATICWTIAYDTIYALADREFDLEIGIKSSAVLFGNKVFRYILLFNFLSLLLLIILGIYCDFNSFFYLGVVICSLFFVRNYFLYKKLGITNCINAFSANHWIGLIIFIIAVIQYI</sequence>
<feature type="chain" id="PRO_0000262795" description="4-hydroxybenzoate octaprenyltransferase">
    <location>
        <begin position="1"/>
        <end position="284"/>
    </location>
</feature>
<feature type="transmembrane region" description="Helical" evidence="1">
    <location>
        <begin position="19"/>
        <end position="39"/>
    </location>
</feature>
<feature type="transmembrane region" description="Helical" evidence="1">
    <location>
        <begin position="42"/>
        <end position="62"/>
    </location>
</feature>
<feature type="transmembrane region" description="Helical" evidence="1">
    <location>
        <begin position="85"/>
        <end position="105"/>
    </location>
</feature>
<feature type="transmembrane region" description="Helical" evidence="1">
    <location>
        <begin position="107"/>
        <end position="127"/>
    </location>
</feature>
<feature type="transmembrane region" description="Helical" evidence="1">
    <location>
        <begin position="134"/>
        <end position="154"/>
    </location>
</feature>
<feature type="transmembrane region" description="Helical" evidence="1">
    <location>
        <begin position="165"/>
        <end position="185"/>
    </location>
</feature>
<feature type="transmembrane region" description="Helical" evidence="1">
    <location>
        <begin position="211"/>
        <end position="231"/>
    </location>
</feature>
<feature type="transmembrane region" description="Helical" evidence="1">
    <location>
        <begin position="233"/>
        <end position="253"/>
    </location>
</feature>
<feature type="transmembrane region" description="Helical" evidence="1">
    <location>
        <begin position="261"/>
        <end position="281"/>
    </location>
</feature>
<organism>
    <name type="scientific">Francisella tularensis subsp. holarctica (strain LVS)</name>
    <dbReference type="NCBI Taxonomy" id="376619"/>
    <lineage>
        <taxon>Bacteria</taxon>
        <taxon>Pseudomonadati</taxon>
        <taxon>Pseudomonadota</taxon>
        <taxon>Gammaproteobacteria</taxon>
        <taxon>Thiotrichales</taxon>
        <taxon>Francisellaceae</taxon>
        <taxon>Francisella</taxon>
    </lineage>
</organism>
<reference key="1">
    <citation type="submission" date="2006-03" db="EMBL/GenBank/DDBJ databases">
        <title>Complete genome sequence of Francisella tularensis LVS (Live Vaccine Strain).</title>
        <authorList>
            <person name="Chain P."/>
            <person name="Larimer F."/>
            <person name="Land M."/>
            <person name="Stilwagen S."/>
            <person name="Larsson P."/>
            <person name="Bearden S."/>
            <person name="Chu M."/>
            <person name="Oyston P."/>
            <person name="Forsman M."/>
            <person name="Andersson S."/>
            <person name="Lindler L."/>
            <person name="Titball R."/>
            <person name="Garcia E."/>
        </authorList>
    </citation>
    <scope>NUCLEOTIDE SEQUENCE [LARGE SCALE GENOMIC DNA]</scope>
    <source>
        <strain>LVS</strain>
    </source>
</reference>
<name>UBIA_FRATH</name>
<comment type="function">
    <text evidence="1">Catalyzes the prenylation of para-hydroxybenzoate (PHB) with an all-trans polyprenyl group. Mediates the second step in the final reaction sequence of ubiquinone-8 (UQ-8) biosynthesis, which is the condensation of the polyisoprenoid side chain with PHB, generating the first membrane-bound Q intermediate 3-octaprenyl-4-hydroxybenzoate.</text>
</comment>
<comment type="catalytic activity">
    <reaction evidence="1">
        <text>all-trans-octaprenyl diphosphate + 4-hydroxybenzoate = 4-hydroxy-3-(all-trans-octaprenyl)benzoate + diphosphate</text>
        <dbReference type="Rhea" id="RHEA:27782"/>
        <dbReference type="ChEBI" id="CHEBI:1617"/>
        <dbReference type="ChEBI" id="CHEBI:17879"/>
        <dbReference type="ChEBI" id="CHEBI:33019"/>
        <dbReference type="ChEBI" id="CHEBI:57711"/>
        <dbReference type="EC" id="2.5.1.39"/>
    </reaction>
</comment>
<comment type="cofactor">
    <cofactor evidence="1">
        <name>Mg(2+)</name>
        <dbReference type="ChEBI" id="CHEBI:18420"/>
    </cofactor>
</comment>
<comment type="pathway">
    <text evidence="1">Cofactor biosynthesis; ubiquinone biosynthesis.</text>
</comment>
<comment type="subcellular location">
    <subcellularLocation>
        <location evidence="1">Cell inner membrane</location>
        <topology evidence="1">Multi-pass membrane protein</topology>
    </subcellularLocation>
</comment>
<comment type="similarity">
    <text evidence="1">Belongs to the UbiA prenyltransferase family.</text>
</comment>
<keyword id="KW-0997">Cell inner membrane</keyword>
<keyword id="KW-1003">Cell membrane</keyword>
<keyword id="KW-0460">Magnesium</keyword>
<keyword id="KW-0472">Membrane</keyword>
<keyword id="KW-1185">Reference proteome</keyword>
<keyword id="KW-0808">Transferase</keyword>
<keyword id="KW-0812">Transmembrane</keyword>
<keyword id="KW-1133">Transmembrane helix</keyword>
<keyword id="KW-0831">Ubiquinone biosynthesis</keyword>
<accession>Q2A564</accession>
<gene>
    <name evidence="1" type="primary">ubiA</name>
    <name type="ordered locus">FTL_0355</name>
</gene>
<evidence type="ECO:0000255" key="1">
    <source>
        <dbReference type="HAMAP-Rule" id="MF_01635"/>
    </source>
</evidence>
<protein>
    <recommendedName>
        <fullName evidence="1">4-hydroxybenzoate octaprenyltransferase</fullName>
        <ecNumber evidence="1">2.5.1.39</ecNumber>
    </recommendedName>
    <alternativeName>
        <fullName evidence="1">4-HB polyprenyltransferase</fullName>
    </alternativeName>
</protein>
<proteinExistence type="inferred from homology"/>
<dbReference type="EC" id="2.5.1.39" evidence="1"/>
<dbReference type="EMBL" id="AM233362">
    <property type="protein sequence ID" value="CAJ78795.1"/>
    <property type="molecule type" value="Genomic_DNA"/>
</dbReference>
<dbReference type="RefSeq" id="WP_003014538.1">
    <property type="nucleotide sequence ID" value="NZ_CP009694.1"/>
</dbReference>
<dbReference type="SMR" id="Q2A564"/>
<dbReference type="KEGG" id="ftl:FTL_0355"/>
<dbReference type="UniPathway" id="UPA00232"/>
<dbReference type="Proteomes" id="UP000001944">
    <property type="component" value="Chromosome"/>
</dbReference>
<dbReference type="GO" id="GO:0005886">
    <property type="term" value="C:plasma membrane"/>
    <property type="evidence" value="ECO:0007669"/>
    <property type="project" value="UniProtKB-SubCell"/>
</dbReference>
<dbReference type="GO" id="GO:0008412">
    <property type="term" value="F:4-hydroxybenzoate polyprenyltransferase activity"/>
    <property type="evidence" value="ECO:0007669"/>
    <property type="project" value="UniProtKB-UniRule"/>
</dbReference>
<dbReference type="GO" id="GO:0006744">
    <property type="term" value="P:ubiquinone biosynthetic process"/>
    <property type="evidence" value="ECO:0007669"/>
    <property type="project" value="UniProtKB-UniRule"/>
</dbReference>
<dbReference type="CDD" id="cd13959">
    <property type="entry name" value="PT_UbiA_COQ2"/>
    <property type="match status" value="1"/>
</dbReference>
<dbReference type="FunFam" id="1.10.357.140:FF:000008">
    <property type="entry name" value="4-hydroxybenzoate octaprenyltransferase"/>
    <property type="match status" value="1"/>
</dbReference>
<dbReference type="FunFam" id="1.20.120.1780:FF:000001">
    <property type="entry name" value="4-hydroxybenzoate octaprenyltransferase"/>
    <property type="match status" value="1"/>
</dbReference>
<dbReference type="Gene3D" id="1.10.357.140">
    <property type="entry name" value="UbiA prenyltransferase"/>
    <property type="match status" value="1"/>
</dbReference>
<dbReference type="Gene3D" id="1.20.120.1780">
    <property type="entry name" value="UbiA prenyltransferase"/>
    <property type="match status" value="1"/>
</dbReference>
<dbReference type="HAMAP" id="MF_01635">
    <property type="entry name" value="UbiA"/>
    <property type="match status" value="1"/>
</dbReference>
<dbReference type="InterPro" id="IPR006370">
    <property type="entry name" value="HB_polyprenyltransferase-like"/>
</dbReference>
<dbReference type="InterPro" id="IPR039653">
    <property type="entry name" value="Prenyltransferase"/>
</dbReference>
<dbReference type="InterPro" id="IPR000537">
    <property type="entry name" value="UbiA_prenyltransferase"/>
</dbReference>
<dbReference type="InterPro" id="IPR030470">
    <property type="entry name" value="UbiA_prenylTrfase_CS"/>
</dbReference>
<dbReference type="InterPro" id="IPR044878">
    <property type="entry name" value="UbiA_sf"/>
</dbReference>
<dbReference type="NCBIfam" id="TIGR01474">
    <property type="entry name" value="ubiA_proteo"/>
    <property type="match status" value="1"/>
</dbReference>
<dbReference type="PANTHER" id="PTHR11048:SF28">
    <property type="entry name" value="4-HYDROXYBENZOATE POLYPRENYLTRANSFERASE, MITOCHONDRIAL"/>
    <property type="match status" value="1"/>
</dbReference>
<dbReference type="PANTHER" id="PTHR11048">
    <property type="entry name" value="PRENYLTRANSFERASES"/>
    <property type="match status" value="1"/>
</dbReference>
<dbReference type="Pfam" id="PF01040">
    <property type="entry name" value="UbiA"/>
    <property type="match status" value="1"/>
</dbReference>
<dbReference type="PROSITE" id="PS00943">
    <property type="entry name" value="UBIA"/>
    <property type="match status" value="1"/>
</dbReference>